<keyword id="KW-0004">4Fe-4S</keyword>
<keyword id="KW-0408">Iron</keyword>
<keyword id="KW-0411">Iron-sulfur</keyword>
<keyword id="KW-0414">Isoprene biosynthesis</keyword>
<keyword id="KW-0479">Metal-binding</keyword>
<keyword id="KW-0560">Oxidoreductase</keyword>
<evidence type="ECO:0000255" key="1">
    <source>
        <dbReference type="HAMAP-Rule" id="MF_00191"/>
    </source>
</evidence>
<reference key="1">
    <citation type="journal article" date="2005" name="Genome Res.">
        <title>The Chlamydophila abortus genome sequence reveals an array of variable proteins that contribute to interspecies variation.</title>
        <authorList>
            <person name="Thomson N.R."/>
            <person name="Yeats C."/>
            <person name="Bell K."/>
            <person name="Holden M.T.G."/>
            <person name="Bentley S.D."/>
            <person name="Livingstone M."/>
            <person name="Cerdeno-Tarraga A.-M."/>
            <person name="Harris B."/>
            <person name="Doggett J."/>
            <person name="Ormond D."/>
            <person name="Mungall K."/>
            <person name="Clarke K."/>
            <person name="Feltwell T."/>
            <person name="Hance Z."/>
            <person name="Sanders M."/>
            <person name="Quail M.A."/>
            <person name="Price C."/>
            <person name="Barrell B.G."/>
            <person name="Parkhill J."/>
            <person name="Longbottom D."/>
        </authorList>
    </citation>
    <scope>NUCLEOTIDE SEQUENCE [LARGE SCALE GENOMIC DNA]</scope>
    <source>
        <strain>DSM 27085 / S26/3</strain>
    </source>
</reference>
<protein>
    <recommendedName>
        <fullName evidence="1">4-hydroxy-3-methylbut-2-enyl diphosphate reductase</fullName>
        <shortName evidence="1">HMBPP reductase</shortName>
        <ecNumber evidence="1">1.17.7.4</ecNumber>
    </recommendedName>
</protein>
<sequence length="309" mass="34477">MRRVILSNPRGFCAGVVRAIQVVESALEKWGAPIYVKHEIVHNRHVVDDLKRRGAIFIEDLKDVPCGEKVIYSAHGIPPEVREEAKARNLFDIDATCVLVTKIHSAVKLYASKGYQIILIGKKKHVEVIGIRGEAPESVTVVEKVEDVANLPFDIHVPLFFVTQTTLSLDDVAEVTQALKARYPHIITLPSSSVCYATQNRQEALRAVLPRVNFVYVIGDVQSSNSNRLREVAEKRNIPARLVNSPDHISDEILHYSGDIAVTAGASTPEHIIQSCISRLKELIPDLQVEEDIFTTEDVVFQPPKELRT</sequence>
<gene>
    <name evidence="1" type="primary">ispH</name>
    <name type="synonym">lytB</name>
    <name type="ordered locus">CAB711</name>
</gene>
<proteinExistence type="inferred from homology"/>
<name>ISPH_CHLAB</name>
<organism>
    <name type="scientific">Chlamydia abortus (strain DSM 27085 / S26/3)</name>
    <name type="common">Chlamydophila abortus</name>
    <dbReference type="NCBI Taxonomy" id="218497"/>
    <lineage>
        <taxon>Bacteria</taxon>
        <taxon>Pseudomonadati</taxon>
        <taxon>Chlamydiota</taxon>
        <taxon>Chlamydiia</taxon>
        <taxon>Chlamydiales</taxon>
        <taxon>Chlamydiaceae</taxon>
        <taxon>Chlamydia/Chlamydophila group</taxon>
        <taxon>Chlamydia</taxon>
    </lineage>
</organism>
<dbReference type="EC" id="1.17.7.4" evidence="1"/>
<dbReference type="EMBL" id="CR848038">
    <property type="protein sequence ID" value="CAH64158.1"/>
    <property type="molecule type" value="Genomic_DNA"/>
</dbReference>
<dbReference type="RefSeq" id="WP_011097282.1">
    <property type="nucleotide sequence ID" value="NC_004552.2"/>
</dbReference>
<dbReference type="SMR" id="Q5L5D3"/>
<dbReference type="KEGG" id="cab:CAB711"/>
<dbReference type="eggNOG" id="COG0761">
    <property type="taxonomic scope" value="Bacteria"/>
</dbReference>
<dbReference type="HOGENOM" id="CLU_027486_1_1_0"/>
<dbReference type="OrthoDB" id="9777362at2"/>
<dbReference type="UniPathway" id="UPA00056">
    <property type="reaction ID" value="UER00097"/>
</dbReference>
<dbReference type="UniPathway" id="UPA00059">
    <property type="reaction ID" value="UER00105"/>
</dbReference>
<dbReference type="Proteomes" id="UP000001012">
    <property type="component" value="Chromosome"/>
</dbReference>
<dbReference type="GO" id="GO:0051539">
    <property type="term" value="F:4 iron, 4 sulfur cluster binding"/>
    <property type="evidence" value="ECO:0007669"/>
    <property type="project" value="UniProtKB-UniRule"/>
</dbReference>
<dbReference type="GO" id="GO:0051745">
    <property type="term" value="F:4-hydroxy-3-methylbut-2-enyl diphosphate reductase activity"/>
    <property type="evidence" value="ECO:0007669"/>
    <property type="project" value="UniProtKB-UniRule"/>
</dbReference>
<dbReference type="GO" id="GO:0046872">
    <property type="term" value="F:metal ion binding"/>
    <property type="evidence" value="ECO:0007669"/>
    <property type="project" value="UniProtKB-KW"/>
</dbReference>
<dbReference type="GO" id="GO:0050992">
    <property type="term" value="P:dimethylallyl diphosphate biosynthetic process"/>
    <property type="evidence" value="ECO:0007669"/>
    <property type="project" value="UniProtKB-UniRule"/>
</dbReference>
<dbReference type="GO" id="GO:0019288">
    <property type="term" value="P:isopentenyl diphosphate biosynthetic process, methylerythritol 4-phosphate pathway"/>
    <property type="evidence" value="ECO:0007669"/>
    <property type="project" value="UniProtKB-UniRule"/>
</dbReference>
<dbReference type="GO" id="GO:0016114">
    <property type="term" value="P:terpenoid biosynthetic process"/>
    <property type="evidence" value="ECO:0007669"/>
    <property type="project" value="UniProtKB-UniRule"/>
</dbReference>
<dbReference type="CDD" id="cd13944">
    <property type="entry name" value="lytB_ispH"/>
    <property type="match status" value="1"/>
</dbReference>
<dbReference type="Gene3D" id="3.40.50.11270">
    <property type="match status" value="1"/>
</dbReference>
<dbReference type="Gene3D" id="3.40.1010.20">
    <property type="entry name" value="4-hydroxy-3-methylbut-2-enyl diphosphate reductase, catalytic domain"/>
    <property type="match status" value="2"/>
</dbReference>
<dbReference type="HAMAP" id="MF_00191">
    <property type="entry name" value="IspH"/>
    <property type="match status" value="1"/>
</dbReference>
<dbReference type="InterPro" id="IPR003451">
    <property type="entry name" value="LytB/IspH"/>
</dbReference>
<dbReference type="NCBIfam" id="TIGR00216">
    <property type="entry name" value="ispH_lytB"/>
    <property type="match status" value="1"/>
</dbReference>
<dbReference type="NCBIfam" id="NF002190">
    <property type="entry name" value="PRK01045.1-4"/>
    <property type="match status" value="1"/>
</dbReference>
<dbReference type="PANTHER" id="PTHR30426">
    <property type="entry name" value="4-HYDROXY-3-METHYLBUT-2-ENYL DIPHOSPHATE REDUCTASE"/>
    <property type="match status" value="1"/>
</dbReference>
<dbReference type="PANTHER" id="PTHR30426:SF0">
    <property type="entry name" value="4-HYDROXY-3-METHYLBUT-2-ENYL DIPHOSPHATE REDUCTASE"/>
    <property type="match status" value="1"/>
</dbReference>
<dbReference type="Pfam" id="PF02401">
    <property type="entry name" value="LYTB"/>
    <property type="match status" value="1"/>
</dbReference>
<feature type="chain" id="PRO_0000128798" description="4-hydroxy-3-methylbut-2-enyl diphosphate reductase">
    <location>
        <begin position="1"/>
        <end position="309"/>
    </location>
</feature>
<feature type="active site" description="Proton donor" evidence="1">
    <location>
        <position position="127"/>
    </location>
</feature>
<feature type="binding site" evidence="1">
    <location>
        <position position="13"/>
    </location>
    <ligand>
        <name>[4Fe-4S] cluster</name>
        <dbReference type="ChEBI" id="CHEBI:49883"/>
    </ligand>
</feature>
<feature type="binding site" evidence="1">
    <location>
        <position position="42"/>
    </location>
    <ligand>
        <name>(2E)-4-hydroxy-3-methylbut-2-enyl diphosphate</name>
        <dbReference type="ChEBI" id="CHEBI:128753"/>
    </ligand>
</feature>
<feature type="binding site" evidence="1">
    <location>
        <position position="42"/>
    </location>
    <ligand>
        <name>dimethylallyl diphosphate</name>
        <dbReference type="ChEBI" id="CHEBI:57623"/>
    </ligand>
</feature>
<feature type="binding site" evidence="1">
    <location>
        <position position="42"/>
    </location>
    <ligand>
        <name>isopentenyl diphosphate</name>
        <dbReference type="ChEBI" id="CHEBI:128769"/>
    </ligand>
</feature>
<feature type="binding site" evidence="1">
    <location>
        <position position="75"/>
    </location>
    <ligand>
        <name>(2E)-4-hydroxy-3-methylbut-2-enyl diphosphate</name>
        <dbReference type="ChEBI" id="CHEBI:128753"/>
    </ligand>
</feature>
<feature type="binding site" evidence="1">
    <location>
        <position position="75"/>
    </location>
    <ligand>
        <name>dimethylallyl diphosphate</name>
        <dbReference type="ChEBI" id="CHEBI:57623"/>
    </ligand>
</feature>
<feature type="binding site" evidence="1">
    <location>
        <position position="75"/>
    </location>
    <ligand>
        <name>isopentenyl diphosphate</name>
        <dbReference type="ChEBI" id="CHEBI:128769"/>
    </ligand>
</feature>
<feature type="binding site" evidence="1">
    <location>
        <position position="97"/>
    </location>
    <ligand>
        <name>[4Fe-4S] cluster</name>
        <dbReference type="ChEBI" id="CHEBI:49883"/>
    </ligand>
</feature>
<feature type="binding site" evidence="1">
    <location>
        <position position="125"/>
    </location>
    <ligand>
        <name>(2E)-4-hydroxy-3-methylbut-2-enyl diphosphate</name>
        <dbReference type="ChEBI" id="CHEBI:128753"/>
    </ligand>
</feature>
<feature type="binding site" evidence="1">
    <location>
        <position position="125"/>
    </location>
    <ligand>
        <name>dimethylallyl diphosphate</name>
        <dbReference type="ChEBI" id="CHEBI:57623"/>
    </ligand>
</feature>
<feature type="binding site" evidence="1">
    <location>
        <position position="125"/>
    </location>
    <ligand>
        <name>isopentenyl diphosphate</name>
        <dbReference type="ChEBI" id="CHEBI:128769"/>
    </ligand>
</feature>
<feature type="binding site" evidence="1">
    <location>
        <position position="165"/>
    </location>
    <ligand>
        <name>(2E)-4-hydroxy-3-methylbut-2-enyl diphosphate</name>
        <dbReference type="ChEBI" id="CHEBI:128753"/>
    </ligand>
</feature>
<feature type="binding site" evidence="1">
    <location>
        <position position="195"/>
    </location>
    <ligand>
        <name>[4Fe-4S] cluster</name>
        <dbReference type="ChEBI" id="CHEBI:49883"/>
    </ligand>
</feature>
<feature type="binding site" evidence="1">
    <location>
        <position position="223"/>
    </location>
    <ligand>
        <name>(2E)-4-hydroxy-3-methylbut-2-enyl diphosphate</name>
        <dbReference type="ChEBI" id="CHEBI:128753"/>
    </ligand>
</feature>
<feature type="binding site" evidence="1">
    <location>
        <position position="223"/>
    </location>
    <ligand>
        <name>dimethylallyl diphosphate</name>
        <dbReference type="ChEBI" id="CHEBI:57623"/>
    </ligand>
</feature>
<feature type="binding site" evidence="1">
    <location>
        <position position="223"/>
    </location>
    <ligand>
        <name>isopentenyl diphosphate</name>
        <dbReference type="ChEBI" id="CHEBI:128769"/>
    </ligand>
</feature>
<feature type="binding site" evidence="1">
    <location>
        <position position="224"/>
    </location>
    <ligand>
        <name>(2E)-4-hydroxy-3-methylbut-2-enyl diphosphate</name>
        <dbReference type="ChEBI" id="CHEBI:128753"/>
    </ligand>
</feature>
<feature type="binding site" evidence="1">
    <location>
        <position position="224"/>
    </location>
    <ligand>
        <name>dimethylallyl diphosphate</name>
        <dbReference type="ChEBI" id="CHEBI:57623"/>
    </ligand>
</feature>
<feature type="binding site" evidence="1">
    <location>
        <position position="224"/>
    </location>
    <ligand>
        <name>isopentenyl diphosphate</name>
        <dbReference type="ChEBI" id="CHEBI:128769"/>
    </ligand>
</feature>
<feature type="binding site" evidence="1">
    <location>
        <position position="225"/>
    </location>
    <ligand>
        <name>(2E)-4-hydroxy-3-methylbut-2-enyl diphosphate</name>
        <dbReference type="ChEBI" id="CHEBI:128753"/>
    </ligand>
</feature>
<feature type="binding site" evidence="1">
    <location>
        <position position="225"/>
    </location>
    <ligand>
        <name>dimethylallyl diphosphate</name>
        <dbReference type="ChEBI" id="CHEBI:57623"/>
    </ligand>
</feature>
<feature type="binding site" evidence="1">
    <location>
        <position position="225"/>
    </location>
    <ligand>
        <name>isopentenyl diphosphate</name>
        <dbReference type="ChEBI" id="CHEBI:128769"/>
    </ligand>
</feature>
<feature type="binding site" evidence="1">
    <location>
        <position position="267"/>
    </location>
    <ligand>
        <name>(2E)-4-hydroxy-3-methylbut-2-enyl diphosphate</name>
        <dbReference type="ChEBI" id="CHEBI:128753"/>
    </ligand>
</feature>
<feature type="binding site" evidence="1">
    <location>
        <position position="267"/>
    </location>
    <ligand>
        <name>dimethylallyl diphosphate</name>
        <dbReference type="ChEBI" id="CHEBI:57623"/>
    </ligand>
</feature>
<feature type="binding site" evidence="1">
    <location>
        <position position="267"/>
    </location>
    <ligand>
        <name>isopentenyl diphosphate</name>
        <dbReference type="ChEBI" id="CHEBI:128769"/>
    </ligand>
</feature>
<comment type="function">
    <text evidence="1">Catalyzes the conversion of 1-hydroxy-2-methyl-2-(E)-butenyl 4-diphosphate (HMBPP) into a mixture of isopentenyl diphosphate (IPP) and dimethylallyl diphosphate (DMAPP). Acts in the terminal step of the DOXP/MEP pathway for isoprenoid precursor biosynthesis.</text>
</comment>
<comment type="catalytic activity">
    <reaction evidence="1">
        <text>isopentenyl diphosphate + 2 oxidized [2Fe-2S]-[ferredoxin] + H2O = (2E)-4-hydroxy-3-methylbut-2-enyl diphosphate + 2 reduced [2Fe-2S]-[ferredoxin] + 2 H(+)</text>
        <dbReference type="Rhea" id="RHEA:24488"/>
        <dbReference type="Rhea" id="RHEA-COMP:10000"/>
        <dbReference type="Rhea" id="RHEA-COMP:10001"/>
        <dbReference type="ChEBI" id="CHEBI:15377"/>
        <dbReference type="ChEBI" id="CHEBI:15378"/>
        <dbReference type="ChEBI" id="CHEBI:33737"/>
        <dbReference type="ChEBI" id="CHEBI:33738"/>
        <dbReference type="ChEBI" id="CHEBI:128753"/>
        <dbReference type="ChEBI" id="CHEBI:128769"/>
        <dbReference type="EC" id="1.17.7.4"/>
    </reaction>
</comment>
<comment type="catalytic activity">
    <reaction evidence="1">
        <text>dimethylallyl diphosphate + 2 oxidized [2Fe-2S]-[ferredoxin] + H2O = (2E)-4-hydroxy-3-methylbut-2-enyl diphosphate + 2 reduced [2Fe-2S]-[ferredoxin] + 2 H(+)</text>
        <dbReference type="Rhea" id="RHEA:24825"/>
        <dbReference type="Rhea" id="RHEA-COMP:10000"/>
        <dbReference type="Rhea" id="RHEA-COMP:10001"/>
        <dbReference type="ChEBI" id="CHEBI:15377"/>
        <dbReference type="ChEBI" id="CHEBI:15378"/>
        <dbReference type="ChEBI" id="CHEBI:33737"/>
        <dbReference type="ChEBI" id="CHEBI:33738"/>
        <dbReference type="ChEBI" id="CHEBI:57623"/>
        <dbReference type="ChEBI" id="CHEBI:128753"/>
        <dbReference type="EC" id="1.17.7.4"/>
    </reaction>
</comment>
<comment type="cofactor">
    <cofactor evidence="1">
        <name>[4Fe-4S] cluster</name>
        <dbReference type="ChEBI" id="CHEBI:49883"/>
    </cofactor>
    <text evidence="1">Binds 1 [4Fe-4S] cluster per subunit.</text>
</comment>
<comment type="pathway">
    <text evidence="1">Isoprenoid biosynthesis; dimethylallyl diphosphate biosynthesis; dimethylallyl diphosphate from (2E)-4-hydroxy-3-methylbutenyl diphosphate: step 1/1.</text>
</comment>
<comment type="pathway">
    <text evidence="1">Isoprenoid biosynthesis; isopentenyl diphosphate biosynthesis via DXP pathway; isopentenyl diphosphate from 1-deoxy-D-xylulose 5-phosphate: step 6/6.</text>
</comment>
<comment type="similarity">
    <text evidence="1">Belongs to the IspH family.</text>
</comment>
<accession>Q5L5D3</accession>